<comment type="function">
    <text evidence="1">An aminoacyl-tRNA editing enzyme that deacylates mischarged D-aminoacyl-tRNAs. Also deacylates mischarged glycyl-tRNA(Ala), protecting cells against glycine mischarging by AlaRS. Acts via tRNA-based rather than protein-based catalysis; rejects L-amino acids rather than detecting D-amino acids in the active site. By recycling D-aminoacyl-tRNA to D-amino acids and free tRNA molecules, this enzyme counteracts the toxicity associated with the formation of D-aminoacyl-tRNA entities in vivo and helps enforce protein L-homochirality.</text>
</comment>
<comment type="catalytic activity">
    <reaction evidence="1">
        <text>glycyl-tRNA(Ala) + H2O = tRNA(Ala) + glycine + H(+)</text>
        <dbReference type="Rhea" id="RHEA:53744"/>
        <dbReference type="Rhea" id="RHEA-COMP:9657"/>
        <dbReference type="Rhea" id="RHEA-COMP:13640"/>
        <dbReference type="ChEBI" id="CHEBI:15377"/>
        <dbReference type="ChEBI" id="CHEBI:15378"/>
        <dbReference type="ChEBI" id="CHEBI:57305"/>
        <dbReference type="ChEBI" id="CHEBI:78442"/>
        <dbReference type="ChEBI" id="CHEBI:78522"/>
        <dbReference type="EC" id="3.1.1.96"/>
    </reaction>
</comment>
<comment type="catalytic activity">
    <reaction evidence="1">
        <text>a D-aminoacyl-tRNA + H2O = a tRNA + a D-alpha-amino acid + H(+)</text>
        <dbReference type="Rhea" id="RHEA:13953"/>
        <dbReference type="Rhea" id="RHEA-COMP:10123"/>
        <dbReference type="Rhea" id="RHEA-COMP:10124"/>
        <dbReference type="ChEBI" id="CHEBI:15377"/>
        <dbReference type="ChEBI" id="CHEBI:15378"/>
        <dbReference type="ChEBI" id="CHEBI:59871"/>
        <dbReference type="ChEBI" id="CHEBI:78442"/>
        <dbReference type="ChEBI" id="CHEBI:79333"/>
        <dbReference type="EC" id="3.1.1.96"/>
    </reaction>
</comment>
<comment type="subunit">
    <text evidence="1">Homodimer.</text>
</comment>
<comment type="subcellular location">
    <subcellularLocation>
        <location evidence="1">Cytoplasm</location>
    </subcellularLocation>
</comment>
<comment type="domain">
    <text evidence="1">A Gly-cisPro motif from one monomer fits into the active site of the other monomer to allow specific chiral rejection of L-amino acids.</text>
</comment>
<comment type="similarity">
    <text evidence="1">Belongs to the DTD family.</text>
</comment>
<feature type="chain" id="PRO_1000050889" description="D-aminoacyl-tRNA deacylase">
    <location>
        <begin position="1"/>
        <end position="145"/>
    </location>
</feature>
<feature type="short sequence motif" description="Gly-cisPro motif, important for rejection of L-amino acids" evidence="1">
    <location>
        <begin position="137"/>
        <end position="138"/>
    </location>
</feature>
<accession>A1REM9</accession>
<name>DTD_SHESW</name>
<organism>
    <name type="scientific">Shewanella sp. (strain W3-18-1)</name>
    <dbReference type="NCBI Taxonomy" id="351745"/>
    <lineage>
        <taxon>Bacteria</taxon>
        <taxon>Pseudomonadati</taxon>
        <taxon>Pseudomonadota</taxon>
        <taxon>Gammaproteobacteria</taxon>
        <taxon>Alteromonadales</taxon>
        <taxon>Shewanellaceae</taxon>
        <taxon>Shewanella</taxon>
    </lineage>
</organism>
<dbReference type="EC" id="3.1.1.96" evidence="1"/>
<dbReference type="EMBL" id="CP000503">
    <property type="protein sequence ID" value="ABM23124.1"/>
    <property type="molecule type" value="Genomic_DNA"/>
</dbReference>
<dbReference type="RefSeq" id="WP_011787670.1">
    <property type="nucleotide sequence ID" value="NC_008750.1"/>
</dbReference>
<dbReference type="SMR" id="A1REM9"/>
<dbReference type="GeneID" id="67441875"/>
<dbReference type="KEGG" id="shw:Sputw3181_0273"/>
<dbReference type="HOGENOM" id="CLU_076901_1_0_6"/>
<dbReference type="Proteomes" id="UP000002597">
    <property type="component" value="Chromosome"/>
</dbReference>
<dbReference type="GO" id="GO:0005737">
    <property type="term" value="C:cytoplasm"/>
    <property type="evidence" value="ECO:0007669"/>
    <property type="project" value="UniProtKB-SubCell"/>
</dbReference>
<dbReference type="GO" id="GO:0051500">
    <property type="term" value="F:D-tyrosyl-tRNA(Tyr) deacylase activity"/>
    <property type="evidence" value="ECO:0007669"/>
    <property type="project" value="TreeGrafter"/>
</dbReference>
<dbReference type="GO" id="GO:0106026">
    <property type="term" value="F:Gly-tRNA(Ala) deacylase activity"/>
    <property type="evidence" value="ECO:0007669"/>
    <property type="project" value="UniProtKB-UniRule"/>
</dbReference>
<dbReference type="GO" id="GO:0043908">
    <property type="term" value="F:Ser(Gly)-tRNA(Ala) hydrolase activity"/>
    <property type="evidence" value="ECO:0007669"/>
    <property type="project" value="UniProtKB-UniRule"/>
</dbReference>
<dbReference type="GO" id="GO:0000049">
    <property type="term" value="F:tRNA binding"/>
    <property type="evidence" value="ECO:0007669"/>
    <property type="project" value="UniProtKB-UniRule"/>
</dbReference>
<dbReference type="GO" id="GO:0019478">
    <property type="term" value="P:D-amino acid catabolic process"/>
    <property type="evidence" value="ECO:0007669"/>
    <property type="project" value="UniProtKB-UniRule"/>
</dbReference>
<dbReference type="CDD" id="cd00563">
    <property type="entry name" value="Dtyr_deacylase"/>
    <property type="match status" value="1"/>
</dbReference>
<dbReference type="FunFam" id="3.50.80.10:FF:000001">
    <property type="entry name" value="D-aminoacyl-tRNA deacylase"/>
    <property type="match status" value="1"/>
</dbReference>
<dbReference type="Gene3D" id="3.50.80.10">
    <property type="entry name" value="D-tyrosyl-tRNA(Tyr) deacylase"/>
    <property type="match status" value="1"/>
</dbReference>
<dbReference type="HAMAP" id="MF_00518">
    <property type="entry name" value="Deacylase_Dtd"/>
    <property type="match status" value="1"/>
</dbReference>
<dbReference type="InterPro" id="IPR003732">
    <property type="entry name" value="Daa-tRNA_deacyls_DTD"/>
</dbReference>
<dbReference type="InterPro" id="IPR023509">
    <property type="entry name" value="DTD-like_sf"/>
</dbReference>
<dbReference type="NCBIfam" id="TIGR00256">
    <property type="entry name" value="D-aminoacyl-tRNA deacylase"/>
    <property type="match status" value="1"/>
</dbReference>
<dbReference type="PANTHER" id="PTHR10472:SF5">
    <property type="entry name" value="D-AMINOACYL-TRNA DEACYLASE 1"/>
    <property type="match status" value="1"/>
</dbReference>
<dbReference type="PANTHER" id="PTHR10472">
    <property type="entry name" value="D-TYROSYL-TRNA TYR DEACYLASE"/>
    <property type="match status" value="1"/>
</dbReference>
<dbReference type="Pfam" id="PF02580">
    <property type="entry name" value="Tyr_Deacylase"/>
    <property type="match status" value="1"/>
</dbReference>
<dbReference type="SUPFAM" id="SSF69500">
    <property type="entry name" value="DTD-like"/>
    <property type="match status" value="1"/>
</dbReference>
<evidence type="ECO:0000255" key="1">
    <source>
        <dbReference type="HAMAP-Rule" id="MF_00518"/>
    </source>
</evidence>
<gene>
    <name evidence="1" type="primary">dtd</name>
    <name type="ordered locus">Sputw3181_0273</name>
</gene>
<proteinExistence type="inferred from homology"/>
<keyword id="KW-0963">Cytoplasm</keyword>
<keyword id="KW-0378">Hydrolase</keyword>
<keyword id="KW-0694">RNA-binding</keyword>
<keyword id="KW-0820">tRNA-binding</keyword>
<reference key="1">
    <citation type="submission" date="2006-12" db="EMBL/GenBank/DDBJ databases">
        <title>Complete sequence of Shewanella sp. W3-18-1.</title>
        <authorList>
            <consortium name="US DOE Joint Genome Institute"/>
            <person name="Copeland A."/>
            <person name="Lucas S."/>
            <person name="Lapidus A."/>
            <person name="Barry K."/>
            <person name="Detter J.C."/>
            <person name="Glavina del Rio T."/>
            <person name="Hammon N."/>
            <person name="Israni S."/>
            <person name="Dalin E."/>
            <person name="Tice H."/>
            <person name="Pitluck S."/>
            <person name="Chain P."/>
            <person name="Malfatti S."/>
            <person name="Shin M."/>
            <person name="Vergez L."/>
            <person name="Schmutz J."/>
            <person name="Larimer F."/>
            <person name="Land M."/>
            <person name="Hauser L."/>
            <person name="Kyrpides N."/>
            <person name="Lykidis A."/>
            <person name="Tiedje J."/>
            <person name="Richardson P."/>
        </authorList>
    </citation>
    <scope>NUCLEOTIDE SEQUENCE [LARGE SCALE GENOMIC DNA]</scope>
    <source>
        <strain>W3-18-1</strain>
    </source>
</reference>
<sequence length="145" mass="15734">MIALIQRVSRASVVVDNQTLGSIDKGLLVLLGVEREDNREKMEKLATKVMSYRVFSDENGKMNLNLEQVGGSLLVVSQFTLAADTGRGLRPSFSGAGTPDQALTLYEEFVAFCRDKGVTTETGQFGADMQVSLVNDGPVTFNLQV</sequence>
<protein>
    <recommendedName>
        <fullName evidence="1">D-aminoacyl-tRNA deacylase</fullName>
        <shortName evidence="1">DTD</shortName>
        <ecNumber evidence="1">3.1.1.96</ecNumber>
    </recommendedName>
    <alternativeName>
        <fullName evidence="1">Gly-tRNA(Ala) deacylase</fullName>
    </alternativeName>
</protein>